<name>VF213_IIV6</name>
<organism>
    <name type="scientific">Invertebrate iridescent virus 6</name>
    <name type="common">IIV-6</name>
    <name type="synonym">Chilo iridescent virus</name>
    <dbReference type="NCBI Taxonomy" id="176652"/>
    <lineage>
        <taxon>Viruses</taxon>
        <taxon>Varidnaviria</taxon>
        <taxon>Bamfordvirae</taxon>
        <taxon>Nucleocytoviricota</taxon>
        <taxon>Megaviricetes</taxon>
        <taxon>Pimascovirales</taxon>
        <taxon>Iridoviridae</taxon>
        <taxon>Betairidovirinae</taxon>
        <taxon>Iridovirus</taxon>
    </lineage>
</organism>
<feature type="chain" id="PRO_0000378027" description="Transmembrane protein 213R">
    <location>
        <begin position="1"/>
        <end position="522"/>
    </location>
</feature>
<feature type="transmembrane region" description="Helical" evidence="1">
    <location>
        <begin position="33"/>
        <end position="50"/>
    </location>
</feature>
<feature type="transmembrane region" description="Helical" evidence="1">
    <location>
        <begin position="55"/>
        <end position="72"/>
    </location>
</feature>
<proteinExistence type="inferred from homology"/>
<comment type="subcellular location">
    <subcellularLocation>
        <location evidence="2">Membrane</location>
        <topology evidence="2">Multi-pass membrane protein</topology>
    </subcellularLocation>
</comment>
<comment type="similarity">
    <text evidence="2">Belongs to the IIV-6 213R family.</text>
</comment>
<organismHost>
    <name type="scientific">Acheta domesticus</name>
    <name type="common">House cricket</name>
    <dbReference type="NCBI Taxonomy" id="6997"/>
</organismHost>
<organismHost>
    <name type="scientific">Chilo suppressalis</name>
    <name type="common">Asiatic rice borer moth</name>
    <dbReference type="NCBI Taxonomy" id="168631"/>
</organismHost>
<organismHost>
    <name type="scientific">Gryllus bimaculatus</name>
    <name type="common">Two-spotted cricket</name>
    <dbReference type="NCBI Taxonomy" id="6999"/>
</organismHost>
<organismHost>
    <name type="scientific">Gryllus campestris</name>
    <dbReference type="NCBI Taxonomy" id="58607"/>
</organismHost>
<organismHost>
    <name type="scientific">Spodoptera frugiperda</name>
    <name type="common">Fall armyworm</name>
    <dbReference type="NCBI Taxonomy" id="7108"/>
</organismHost>
<keyword id="KW-0472">Membrane</keyword>
<keyword id="KW-1185">Reference proteome</keyword>
<keyword id="KW-0812">Transmembrane</keyword>
<keyword id="KW-1133">Transmembrane helix</keyword>
<reference key="1">
    <citation type="journal article" date="2001" name="Virology">
        <title>Analysis of the first complete DNA sequence of an invertebrate iridovirus: coding strategy of the genome of Chilo iridescent virus.</title>
        <authorList>
            <person name="Jakob N.J."/>
            <person name="Mueller K."/>
            <person name="Bahr U."/>
            <person name="Darai G."/>
        </authorList>
    </citation>
    <scope>NUCLEOTIDE SEQUENCE [LARGE SCALE GENOMIC DNA]</scope>
</reference>
<reference key="2">
    <citation type="journal article" date="2007" name="Virol. J.">
        <title>Comparative genomic analysis of the family Iridoviridae: re-annotating and defining the core set of iridovirus genes.</title>
        <authorList>
            <person name="Eaton H.E."/>
            <person name="Metcalf J."/>
            <person name="Penny E."/>
            <person name="Tcherepanov V."/>
            <person name="Upton C."/>
            <person name="Brunetti C.R."/>
        </authorList>
    </citation>
    <scope>GENOME REANNOTATION</scope>
</reference>
<protein>
    <recommendedName>
        <fullName>Transmembrane protein 213R</fullName>
    </recommendedName>
</protein>
<dbReference type="EMBL" id="AF303741">
    <property type="protein sequence ID" value="AAK82075.1"/>
    <property type="molecule type" value="Genomic_DNA"/>
</dbReference>
<dbReference type="RefSeq" id="NP_149676.1">
    <property type="nucleotide sequence ID" value="NC_003038.1"/>
</dbReference>
<dbReference type="KEGG" id="vg:1733197"/>
<dbReference type="OrthoDB" id="21900at10239"/>
<dbReference type="Proteomes" id="UP000001359">
    <property type="component" value="Genome"/>
</dbReference>
<dbReference type="GO" id="GO:0016020">
    <property type="term" value="C:membrane"/>
    <property type="evidence" value="ECO:0007669"/>
    <property type="project" value="UniProtKB-SubCell"/>
</dbReference>
<dbReference type="InterPro" id="IPR043915">
    <property type="entry name" value="P9_TM"/>
</dbReference>
<dbReference type="Pfam" id="PF19066">
    <property type="entry name" value="P9_TM"/>
    <property type="match status" value="1"/>
</dbReference>
<evidence type="ECO:0000255" key="1"/>
<evidence type="ECO:0000305" key="2"/>
<accession>Q91FV8</accession>
<gene>
    <name type="ORF">IIV6-213R</name>
</gene>
<sequence>MSKQKLWIDDLNSFFGDWSLIPTSKMTREEKLNTITRLILIASLVLLLFGKKDASLYILIIGLIIVIVIYSQEKPSTVEGFEIINGEIVDDEGEKNEIATNLGTPSSYQGGASKGRTIGGVTLPGGRAPIYTCNVTYYPTTMSGNSVMITGKNNALVGPQNPKTLMPPPIAPPLGDLDTWKASEWTTHSHVNSRTVQYEDEAGPFRTFNNNDERVLPVNCLSSYEDDQANNPCFRRYQSGIGIKNEIGIMEPFEHTPNLIKGETPPLIKELDEPYEPTFARRANDEKDIIEPFISELQPGIYSSNIDQPILDNAGLLPDMPQPQTTLFTPMINGKPRDKMQIYVEDKEADAIPGITDSGYHTLDRAYDLPQRYVRERLPKRYGEWRARRSTMPGIPFETPVGYGSGARPIGSFPTEGAVVSPPGNACTGWVTGIENVRDLSGQSEMSEYYNKNKLDMFDVDENAPLYAINPDAVKMHIDVTNRFRSDMQESLMRKRNAEAWQRKMYPLDTNHRRMLGGTGQF</sequence>